<comment type="function">
    <text evidence="1">Catalyzes the reversible conversion of 3-phosphohydroxypyruvate to phosphoserine and of 3-hydroxy-2-oxo-4-phosphonooxybutanoate to phosphohydroxythreonine.</text>
</comment>
<comment type="catalytic activity">
    <reaction evidence="1">
        <text>O-phospho-L-serine + 2-oxoglutarate = 3-phosphooxypyruvate + L-glutamate</text>
        <dbReference type="Rhea" id="RHEA:14329"/>
        <dbReference type="ChEBI" id="CHEBI:16810"/>
        <dbReference type="ChEBI" id="CHEBI:18110"/>
        <dbReference type="ChEBI" id="CHEBI:29985"/>
        <dbReference type="ChEBI" id="CHEBI:57524"/>
        <dbReference type="EC" id="2.6.1.52"/>
    </reaction>
</comment>
<comment type="catalytic activity">
    <reaction evidence="1">
        <text>4-(phosphooxy)-L-threonine + 2-oxoglutarate = (R)-3-hydroxy-2-oxo-4-phosphooxybutanoate + L-glutamate</text>
        <dbReference type="Rhea" id="RHEA:16573"/>
        <dbReference type="ChEBI" id="CHEBI:16810"/>
        <dbReference type="ChEBI" id="CHEBI:29985"/>
        <dbReference type="ChEBI" id="CHEBI:58452"/>
        <dbReference type="ChEBI" id="CHEBI:58538"/>
        <dbReference type="EC" id="2.6.1.52"/>
    </reaction>
</comment>
<comment type="cofactor">
    <cofactor evidence="1">
        <name>pyridoxal 5'-phosphate</name>
        <dbReference type="ChEBI" id="CHEBI:597326"/>
    </cofactor>
    <text evidence="1">Binds 1 pyridoxal phosphate per subunit.</text>
</comment>
<comment type="pathway">
    <text evidence="1">Amino-acid biosynthesis; L-serine biosynthesis; L-serine from 3-phospho-D-glycerate: step 2/3.</text>
</comment>
<comment type="pathway">
    <text evidence="1">Cofactor biosynthesis; pyridoxine 5'-phosphate biosynthesis; pyridoxine 5'-phosphate from D-erythrose 4-phosphate: step 3/5.</text>
</comment>
<comment type="subunit">
    <text evidence="1">Homodimer.</text>
</comment>
<comment type="subcellular location">
    <subcellularLocation>
        <location evidence="1">Cytoplasm</location>
    </subcellularLocation>
</comment>
<comment type="similarity">
    <text evidence="1">Belongs to the class-V pyridoxal-phosphate-dependent aminotransferase family. SerC subfamily.</text>
</comment>
<sequence length="360" mass="39340">MRVFNFSAGPAALPEEVLRQAADEMLDWHGSGMSVMEMSHRGKEFMSIHEAALADLRELLDVPASHRILFLQGGGIAENAIVPMNLLGSRKTADFVVTGSWSQKSFNEAKKYGTPHLAASGKTADGFTRAPARAEWQLSDDPAYVHLCTNETIDGVETFEIPDLGDVPLVADVSSHILSRPMDVAKYGVLFGGAQKNIGMAGVTVVIVREDLLDRALSICPSAFEWKTVAANNSLYNTPPTYAIYIAGLVFQWLKRQGGLEAIEARNIEKAKLLYDTIDASGFYLNKVEPAVRSRMNVPFFLADETRNEDFLAGAKARGLLQLKGHKSVGGMRASIYNAVPLEGVKALVEYMKDFEQRGA</sequence>
<evidence type="ECO:0000255" key="1">
    <source>
        <dbReference type="HAMAP-Rule" id="MF_00160"/>
    </source>
</evidence>
<feature type="chain" id="PRO_1000097204" description="Phosphoserine aminotransferase">
    <location>
        <begin position="1"/>
        <end position="360"/>
    </location>
</feature>
<feature type="binding site" evidence="1">
    <location>
        <position position="41"/>
    </location>
    <ligand>
        <name>L-glutamate</name>
        <dbReference type="ChEBI" id="CHEBI:29985"/>
    </ligand>
</feature>
<feature type="binding site" evidence="1">
    <location>
        <position position="101"/>
    </location>
    <ligand>
        <name>pyridoxal 5'-phosphate</name>
        <dbReference type="ChEBI" id="CHEBI:597326"/>
    </ligand>
</feature>
<feature type="binding site" evidence="1">
    <location>
        <position position="152"/>
    </location>
    <ligand>
        <name>pyridoxal 5'-phosphate</name>
        <dbReference type="ChEBI" id="CHEBI:597326"/>
    </ligand>
</feature>
<feature type="binding site" evidence="1">
    <location>
        <position position="172"/>
    </location>
    <ligand>
        <name>pyridoxal 5'-phosphate</name>
        <dbReference type="ChEBI" id="CHEBI:597326"/>
    </ligand>
</feature>
<feature type="binding site" evidence="1">
    <location>
        <position position="195"/>
    </location>
    <ligand>
        <name>pyridoxal 5'-phosphate</name>
        <dbReference type="ChEBI" id="CHEBI:597326"/>
    </ligand>
</feature>
<feature type="binding site" evidence="1">
    <location>
        <begin position="237"/>
        <end position="238"/>
    </location>
    <ligand>
        <name>pyridoxal 5'-phosphate</name>
        <dbReference type="ChEBI" id="CHEBI:597326"/>
    </ligand>
</feature>
<feature type="modified residue" description="N6-(pyridoxal phosphate)lysine" evidence="1">
    <location>
        <position position="196"/>
    </location>
</feature>
<dbReference type="EC" id="2.6.1.52" evidence="1"/>
<dbReference type="EMBL" id="CP001025">
    <property type="protein sequence ID" value="ACB63413.1"/>
    <property type="molecule type" value="Genomic_DNA"/>
</dbReference>
<dbReference type="RefSeq" id="WP_012363343.1">
    <property type="nucleotide sequence ID" value="NC_010551.1"/>
</dbReference>
<dbReference type="SMR" id="B1YV30"/>
<dbReference type="KEGG" id="bac:BamMC406_0922"/>
<dbReference type="HOGENOM" id="CLU_034866_0_2_4"/>
<dbReference type="OrthoDB" id="9809412at2"/>
<dbReference type="UniPathway" id="UPA00135">
    <property type="reaction ID" value="UER00197"/>
</dbReference>
<dbReference type="UniPathway" id="UPA00244">
    <property type="reaction ID" value="UER00311"/>
</dbReference>
<dbReference type="Proteomes" id="UP000001680">
    <property type="component" value="Chromosome 1"/>
</dbReference>
<dbReference type="GO" id="GO:0005737">
    <property type="term" value="C:cytoplasm"/>
    <property type="evidence" value="ECO:0007669"/>
    <property type="project" value="UniProtKB-SubCell"/>
</dbReference>
<dbReference type="GO" id="GO:0004648">
    <property type="term" value="F:O-phospho-L-serine:2-oxoglutarate aminotransferase activity"/>
    <property type="evidence" value="ECO:0007669"/>
    <property type="project" value="UniProtKB-UniRule"/>
</dbReference>
<dbReference type="GO" id="GO:0030170">
    <property type="term" value="F:pyridoxal phosphate binding"/>
    <property type="evidence" value="ECO:0007669"/>
    <property type="project" value="UniProtKB-UniRule"/>
</dbReference>
<dbReference type="GO" id="GO:0006564">
    <property type="term" value="P:L-serine biosynthetic process"/>
    <property type="evidence" value="ECO:0007669"/>
    <property type="project" value="UniProtKB-UniRule"/>
</dbReference>
<dbReference type="GO" id="GO:0008615">
    <property type="term" value="P:pyridoxine biosynthetic process"/>
    <property type="evidence" value="ECO:0007669"/>
    <property type="project" value="UniProtKB-UniRule"/>
</dbReference>
<dbReference type="CDD" id="cd00611">
    <property type="entry name" value="PSAT_like"/>
    <property type="match status" value="1"/>
</dbReference>
<dbReference type="FunFam" id="3.40.640.10:FF:000010">
    <property type="entry name" value="Phosphoserine aminotransferase"/>
    <property type="match status" value="1"/>
</dbReference>
<dbReference type="FunFam" id="3.90.1150.10:FF:000006">
    <property type="entry name" value="Phosphoserine aminotransferase"/>
    <property type="match status" value="1"/>
</dbReference>
<dbReference type="Gene3D" id="3.90.1150.10">
    <property type="entry name" value="Aspartate Aminotransferase, domain 1"/>
    <property type="match status" value="1"/>
</dbReference>
<dbReference type="Gene3D" id="3.40.640.10">
    <property type="entry name" value="Type I PLP-dependent aspartate aminotransferase-like (Major domain)"/>
    <property type="match status" value="1"/>
</dbReference>
<dbReference type="HAMAP" id="MF_00160">
    <property type="entry name" value="SerC_aminotrans_5"/>
    <property type="match status" value="1"/>
</dbReference>
<dbReference type="InterPro" id="IPR000192">
    <property type="entry name" value="Aminotrans_V_dom"/>
</dbReference>
<dbReference type="InterPro" id="IPR020578">
    <property type="entry name" value="Aminotrans_V_PyrdxlP_BS"/>
</dbReference>
<dbReference type="InterPro" id="IPR022278">
    <property type="entry name" value="Pser_aminoTfrase"/>
</dbReference>
<dbReference type="InterPro" id="IPR015424">
    <property type="entry name" value="PyrdxlP-dep_Trfase"/>
</dbReference>
<dbReference type="InterPro" id="IPR015421">
    <property type="entry name" value="PyrdxlP-dep_Trfase_major"/>
</dbReference>
<dbReference type="InterPro" id="IPR015422">
    <property type="entry name" value="PyrdxlP-dep_Trfase_small"/>
</dbReference>
<dbReference type="NCBIfam" id="NF003764">
    <property type="entry name" value="PRK05355.1"/>
    <property type="match status" value="1"/>
</dbReference>
<dbReference type="NCBIfam" id="TIGR01364">
    <property type="entry name" value="serC_1"/>
    <property type="match status" value="1"/>
</dbReference>
<dbReference type="PANTHER" id="PTHR43247">
    <property type="entry name" value="PHOSPHOSERINE AMINOTRANSFERASE"/>
    <property type="match status" value="1"/>
</dbReference>
<dbReference type="PANTHER" id="PTHR43247:SF1">
    <property type="entry name" value="PHOSPHOSERINE AMINOTRANSFERASE"/>
    <property type="match status" value="1"/>
</dbReference>
<dbReference type="Pfam" id="PF00266">
    <property type="entry name" value="Aminotran_5"/>
    <property type="match status" value="1"/>
</dbReference>
<dbReference type="PIRSF" id="PIRSF000525">
    <property type="entry name" value="SerC"/>
    <property type="match status" value="1"/>
</dbReference>
<dbReference type="SUPFAM" id="SSF53383">
    <property type="entry name" value="PLP-dependent transferases"/>
    <property type="match status" value="1"/>
</dbReference>
<dbReference type="PROSITE" id="PS00595">
    <property type="entry name" value="AA_TRANSFER_CLASS_5"/>
    <property type="match status" value="1"/>
</dbReference>
<protein>
    <recommendedName>
        <fullName evidence="1">Phosphoserine aminotransferase</fullName>
        <ecNumber evidence="1">2.6.1.52</ecNumber>
    </recommendedName>
    <alternativeName>
        <fullName evidence="1">Phosphohydroxythreonine aminotransferase</fullName>
        <shortName evidence="1">PSAT</shortName>
    </alternativeName>
</protein>
<proteinExistence type="inferred from homology"/>
<name>SERC_BURA4</name>
<gene>
    <name evidence="1" type="primary">serC</name>
    <name type="ordered locus">BamMC406_0922</name>
</gene>
<organism>
    <name type="scientific">Burkholderia ambifaria (strain MC40-6)</name>
    <dbReference type="NCBI Taxonomy" id="398577"/>
    <lineage>
        <taxon>Bacteria</taxon>
        <taxon>Pseudomonadati</taxon>
        <taxon>Pseudomonadota</taxon>
        <taxon>Betaproteobacteria</taxon>
        <taxon>Burkholderiales</taxon>
        <taxon>Burkholderiaceae</taxon>
        <taxon>Burkholderia</taxon>
        <taxon>Burkholderia cepacia complex</taxon>
    </lineage>
</organism>
<keyword id="KW-0028">Amino-acid biosynthesis</keyword>
<keyword id="KW-0032">Aminotransferase</keyword>
<keyword id="KW-0963">Cytoplasm</keyword>
<keyword id="KW-0663">Pyridoxal phosphate</keyword>
<keyword id="KW-0664">Pyridoxine biosynthesis</keyword>
<keyword id="KW-0718">Serine biosynthesis</keyword>
<keyword id="KW-0808">Transferase</keyword>
<accession>B1YV30</accession>
<reference key="1">
    <citation type="submission" date="2008-04" db="EMBL/GenBank/DDBJ databases">
        <title>Complete sequence of chromosome 1 of Burkholderia ambifaria MC40-6.</title>
        <authorList>
            <person name="Copeland A."/>
            <person name="Lucas S."/>
            <person name="Lapidus A."/>
            <person name="Glavina del Rio T."/>
            <person name="Dalin E."/>
            <person name="Tice H."/>
            <person name="Pitluck S."/>
            <person name="Chain P."/>
            <person name="Malfatti S."/>
            <person name="Shin M."/>
            <person name="Vergez L."/>
            <person name="Lang D."/>
            <person name="Schmutz J."/>
            <person name="Larimer F."/>
            <person name="Land M."/>
            <person name="Hauser L."/>
            <person name="Kyrpides N."/>
            <person name="Lykidis A."/>
            <person name="Ramette A."/>
            <person name="Konstantinidis K."/>
            <person name="Tiedje J."/>
            <person name="Richardson P."/>
        </authorList>
    </citation>
    <scope>NUCLEOTIDE SEQUENCE [LARGE SCALE GENOMIC DNA]</scope>
    <source>
        <strain>MC40-6</strain>
    </source>
</reference>